<evidence type="ECO:0000250" key="1">
    <source>
        <dbReference type="UniProtKB" id="P83952"/>
    </source>
</evidence>
<evidence type="ECO:0000255" key="2"/>
<evidence type="ECO:0000255" key="3">
    <source>
        <dbReference type="PROSITE-ProRule" id="PRU00722"/>
    </source>
</evidence>
<evidence type="ECO:0000303" key="4">
    <source>
    </source>
</evidence>
<evidence type="ECO:0000305" key="5"/>
<evidence type="ECO:0000305" key="6">
    <source>
    </source>
</evidence>
<keyword id="KW-0044">Antibiotic</keyword>
<keyword id="KW-0929">Antimicrobial</keyword>
<keyword id="KW-1015">Disulfide bond</keyword>
<keyword id="KW-0964">Secreted</keyword>
<keyword id="KW-0732">Signal</keyword>
<reference key="1">
    <citation type="journal article" date="2008" name="Cell. Mol. Life Sci.">
        <title>Common evolution of waprin and Kunitz-like toxin families in Australian venomous snakes.</title>
        <authorList>
            <person name="St Pierre L."/>
            <person name="Earl S.T."/>
            <person name="Filippovich I."/>
            <person name="Sorokina N."/>
            <person name="Masci P.P."/>
            <person name="De Jersey J."/>
            <person name="Lavin M.F."/>
        </authorList>
    </citation>
    <scope>NUCLEOTIDE SEQUENCE [GENOMIC DNA / MRNA]</scope>
    <source>
        <tissue>Venom gland</tissue>
    </source>
</reference>
<organism>
    <name type="scientific">Hoplocephalus stephensii</name>
    <name type="common">Stephens's banded snake</name>
    <dbReference type="NCBI Taxonomy" id="196418"/>
    <lineage>
        <taxon>Eukaryota</taxon>
        <taxon>Metazoa</taxon>
        <taxon>Chordata</taxon>
        <taxon>Craniata</taxon>
        <taxon>Vertebrata</taxon>
        <taxon>Euteleostomi</taxon>
        <taxon>Lepidosauria</taxon>
        <taxon>Squamata</taxon>
        <taxon>Bifurcata</taxon>
        <taxon>Unidentata</taxon>
        <taxon>Episquamata</taxon>
        <taxon>Toxicofera</taxon>
        <taxon>Serpentes</taxon>
        <taxon>Colubroidea</taxon>
        <taxon>Elapidae</taxon>
        <taxon>Notechinae</taxon>
        <taxon>Hoplocephalus</taxon>
    </lineage>
</organism>
<dbReference type="EMBL" id="DQ917563">
    <property type="protein sequence ID" value="ABK63592.1"/>
    <property type="molecule type" value="mRNA"/>
</dbReference>
<dbReference type="EMBL" id="EU401829">
    <property type="protein sequence ID" value="ACC77778.1"/>
    <property type="molecule type" value="Genomic_DNA"/>
</dbReference>
<dbReference type="SMR" id="B5G6H3"/>
<dbReference type="GO" id="GO:0005576">
    <property type="term" value="C:extracellular region"/>
    <property type="evidence" value="ECO:0000250"/>
    <property type="project" value="UniProtKB"/>
</dbReference>
<dbReference type="GO" id="GO:0005615">
    <property type="term" value="C:extracellular space"/>
    <property type="evidence" value="ECO:0007669"/>
    <property type="project" value="TreeGrafter"/>
</dbReference>
<dbReference type="GO" id="GO:0004867">
    <property type="term" value="F:serine-type endopeptidase inhibitor activity"/>
    <property type="evidence" value="ECO:0007669"/>
    <property type="project" value="TreeGrafter"/>
</dbReference>
<dbReference type="GO" id="GO:0019731">
    <property type="term" value="P:antibacterial humoral response"/>
    <property type="evidence" value="ECO:0007669"/>
    <property type="project" value="TreeGrafter"/>
</dbReference>
<dbReference type="GO" id="GO:0045087">
    <property type="term" value="P:innate immune response"/>
    <property type="evidence" value="ECO:0007669"/>
    <property type="project" value="TreeGrafter"/>
</dbReference>
<dbReference type="GO" id="GO:0044278">
    <property type="term" value="P:venom-mediated disruption of cell wall in another organism"/>
    <property type="evidence" value="ECO:0000250"/>
    <property type="project" value="UniProtKB"/>
</dbReference>
<dbReference type="Gene3D" id="4.10.75.10">
    <property type="entry name" value="Elafin-like"/>
    <property type="match status" value="1"/>
</dbReference>
<dbReference type="InterPro" id="IPR036645">
    <property type="entry name" value="Elafin-like_sf"/>
</dbReference>
<dbReference type="InterPro" id="IPR008197">
    <property type="entry name" value="WAP_dom"/>
</dbReference>
<dbReference type="InterPro" id="IPR050514">
    <property type="entry name" value="WAP_four-disulfide_core"/>
</dbReference>
<dbReference type="PANTHER" id="PTHR19441:SF44">
    <property type="entry name" value="ANTILEUKOPROTEINASE"/>
    <property type="match status" value="1"/>
</dbReference>
<dbReference type="PANTHER" id="PTHR19441">
    <property type="entry name" value="WHEY ACDIC PROTEIN WAP"/>
    <property type="match status" value="1"/>
</dbReference>
<dbReference type="Pfam" id="PF00095">
    <property type="entry name" value="WAP"/>
    <property type="match status" value="1"/>
</dbReference>
<dbReference type="PRINTS" id="PR00003">
    <property type="entry name" value="4DISULPHCORE"/>
</dbReference>
<dbReference type="SMART" id="SM00217">
    <property type="entry name" value="WAP"/>
    <property type="match status" value="1"/>
</dbReference>
<dbReference type="SUPFAM" id="SSF57256">
    <property type="entry name" value="Elafin-like"/>
    <property type="match status" value="1"/>
</dbReference>
<dbReference type="PROSITE" id="PS51390">
    <property type="entry name" value="WAP"/>
    <property type="match status" value="1"/>
</dbReference>
<feature type="signal peptide" evidence="2">
    <location>
        <begin position="1"/>
        <end position="24"/>
    </location>
</feature>
<feature type="chain" id="PRO_5000395573" description="Stewaprin-a">
    <location>
        <begin position="25"/>
        <end position="75"/>
    </location>
</feature>
<feature type="domain" description="WAP" evidence="3">
    <location>
        <begin position="27"/>
        <end position="72"/>
    </location>
</feature>
<feature type="disulfide bond" evidence="3">
    <location>
        <begin position="34"/>
        <end position="60"/>
    </location>
</feature>
<feature type="disulfide bond" evidence="3">
    <location>
        <begin position="43"/>
        <end position="64"/>
    </location>
</feature>
<feature type="disulfide bond" evidence="3">
    <location>
        <begin position="47"/>
        <end position="59"/>
    </location>
</feature>
<feature type="disulfide bond" evidence="3">
    <location>
        <begin position="53"/>
        <end position="68"/>
    </location>
</feature>
<accession>B5G6H3</accession>
<sequence length="75" mass="8355">MSSGGLLLLLGLLTLWAELIPVSGQDHPKKPGLCPPRPQKPPCVRECKNDWSCPGEQKCCRYGCIFECRDPIFVK</sequence>
<comment type="function">
    <text evidence="1">Damages membranes of susceptible bacteria. Has no hemolytic activity. Not toxic to mice. Does not inhibit the proteinases elastase and cathepsin G.</text>
</comment>
<comment type="subcellular location">
    <subcellularLocation>
        <location evidence="6">Secreted</location>
    </subcellularLocation>
</comment>
<comment type="tissue specificity">
    <text evidence="6">Expressed by the venom gland.</text>
</comment>
<comment type="similarity">
    <text evidence="5">Belongs to the venom waprin family.</text>
</comment>
<name>WAPA_HOPST</name>
<protein>
    <recommendedName>
        <fullName evidence="4">Stewaprin-a</fullName>
    </recommendedName>
</protein>
<proteinExistence type="inferred from homology"/>